<protein>
    <recommendedName>
        <fullName evidence="1">3-isopropylmalate dehydratase large subunit</fullName>
        <ecNumber evidence="1">4.2.1.33</ecNumber>
    </recommendedName>
    <alternativeName>
        <fullName evidence="1">Alpha-IPM isomerase</fullName>
        <shortName evidence="1">IPMI</shortName>
    </alternativeName>
    <alternativeName>
        <fullName evidence="1">Isopropylmalate isomerase</fullName>
    </alternativeName>
</protein>
<reference key="1">
    <citation type="journal article" date="2011" name="PLoS ONE">
        <title>The genome of Akkermansia muciniphila, a dedicated intestinal mucin degrader, and its use in exploring intestinal metagenomes.</title>
        <authorList>
            <person name="van Passel M.W."/>
            <person name="Kant R."/>
            <person name="Zoetendal E.G."/>
            <person name="Plugge C.M."/>
            <person name="Derrien M."/>
            <person name="Malfatti S.A."/>
            <person name="Chain P.S."/>
            <person name="Woyke T."/>
            <person name="Palva A."/>
            <person name="de Vos W.M."/>
            <person name="Smidt H."/>
        </authorList>
    </citation>
    <scope>NUCLEOTIDE SEQUENCE [LARGE SCALE GENOMIC DNA]</scope>
    <source>
        <strain>ATCC BAA-835 / DSM 22959 / JCM 33894 / BCRC 81048 / CCUG 64013 / CIP 107961 / Muc</strain>
    </source>
</reference>
<keyword id="KW-0004">4Fe-4S</keyword>
<keyword id="KW-0028">Amino-acid biosynthesis</keyword>
<keyword id="KW-0100">Branched-chain amino acid biosynthesis</keyword>
<keyword id="KW-0408">Iron</keyword>
<keyword id="KW-0411">Iron-sulfur</keyword>
<keyword id="KW-0432">Leucine biosynthesis</keyword>
<keyword id="KW-0456">Lyase</keyword>
<keyword id="KW-0479">Metal-binding</keyword>
<keyword id="KW-1185">Reference proteome</keyword>
<organism>
    <name type="scientific">Akkermansia muciniphila (strain ATCC BAA-835 / DSM 22959 / JCM 33894 / BCRC 81048 / CCUG 64013 / CIP 107961 / Muc)</name>
    <dbReference type="NCBI Taxonomy" id="349741"/>
    <lineage>
        <taxon>Bacteria</taxon>
        <taxon>Pseudomonadati</taxon>
        <taxon>Verrucomicrobiota</taxon>
        <taxon>Verrucomicrobiia</taxon>
        <taxon>Verrucomicrobiales</taxon>
        <taxon>Akkermansiaceae</taxon>
        <taxon>Akkermansia</taxon>
    </lineage>
</organism>
<proteinExistence type="inferred from homology"/>
<sequence>MGKTLFQKIWDAHTVGILPDGRTQMFIATHLLHEVTSPQAFGMVRDLGLTVRHPERTFATVDHIIPTDNQAEPFADATADAMIRELRRNCAENGIRFFDLPTGLQGIVHMVGPELGITQPGMTIVCGDSHTATHGAFGAIAMGIGTTQVRDVLATQTLALSPLKVRRINVNGKLAPGVRAKDVALHIIGLLGAKGGLGFAYEYGGEVIDAMSMDERMTLCNMSIEGAARCGYVNPDRTTVEYIKGRLFAPTGADWDKAVERWLGFASDADAEYDEIVEIDGASIEPTLTWGISPDQNTGISGSTPNPSDAADDDERKMINEALEYMKFPADMPLKGLPVQVCFVGSCTNGRISDFREVAALIKGRHVAPGIRALAVPGSQMTARQCEEEGIADIFREAGFEWRLAGCSMCLAMNPDKLQGDQLCASSSNRNFKGRQGSPTGRTLLMSPAMVAAAALTGKVSDAREVFSLN</sequence>
<accession>B2UPW8</accession>
<name>LEUC_AKKM8</name>
<comment type="function">
    <text evidence="1">Catalyzes the isomerization between 2-isopropylmalate and 3-isopropylmalate, via the formation of 2-isopropylmaleate.</text>
</comment>
<comment type="catalytic activity">
    <reaction evidence="1">
        <text>(2R,3S)-3-isopropylmalate = (2S)-2-isopropylmalate</text>
        <dbReference type="Rhea" id="RHEA:32287"/>
        <dbReference type="ChEBI" id="CHEBI:1178"/>
        <dbReference type="ChEBI" id="CHEBI:35121"/>
        <dbReference type="EC" id="4.2.1.33"/>
    </reaction>
</comment>
<comment type="cofactor">
    <cofactor evidence="1">
        <name>[4Fe-4S] cluster</name>
        <dbReference type="ChEBI" id="CHEBI:49883"/>
    </cofactor>
    <text evidence="1">Binds 1 [4Fe-4S] cluster per subunit.</text>
</comment>
<comment type="pathway">
    <text evidence="1">Amino-acid biosynthesis; L-leucine biosynthesis; L-leucine from 3-methyl-2-oxobutanoate: step 2/4.</text>
</comment>
<comment type="subunit">
    <text evidence="1">Heterodimer of LeuC and LeuD.</text>
</comment>
<comment type="similarity">
    <text evidence="1">Belongs to the aconitase/IPM isomerase family. LeuC type 1 subfamily.</text>
</comment>
<dbReference type="EC" id="4.2.1.33" evidence="1"/>
<dbReference type="EMBL" id="CP001071">
    <property type="protein sequence ID" value="ACD04503.1"/>
    <property type="molecule type" value="Genomic_DNA"/>
</dbReference>
<dbReference type="RefSeq" id="WP_012419718.1">
    <property type="nucleotide sequence ID" value="NZ_CP071807.1"/>
</dbReference>
<dbReference type="SMR" id="B2UPW8"/>
<dbReference type="STRING" id="349741.Amuc_0666"/>
<dbReference type="PaxDb" id="349741-Amuc_0666"/>
<dbReference type="GeneID" id="60880441"/>
<dbReference type="KEGG" id="amu:Amuc_0666"/>
<dbReference type="eggNOG" id="COG0065">
    <property type="taxonomic scope" value="Bacteria"/>
</dbReference>
<dbReference type="HOGENOM" id="CLU_006714_3_4_0"/>
<dbReference type="OrthoDB" id="9802769at2"/>
<dbReference type="BioCyc" id="AMUC349741:G1GBX-724-MONOMER"/>
<dbReference type="UniPathway" id="UPA00048">
    <property type="reaction ID" value="UER00071"/>
</dbReference>
<dbReference type="Proteomes" id="UP000001031">
    <property type="component" value="Chromosome"/>
</dbReference>
<dbReference type="GO" id="GO:0003861">
    <property type="term" value="F:3-isopropylmalate dehydratase activity"/>
    <property type="evidence" value="ECO:0007669"/>
    <property type="project" value="UniProtKB-UniRule"/>
</dbReference>
<dbReference type="GO" id="GO:0051539">
    <property type="term" value="F:4 iron, 4 sulfur cluster binding"/>
    <property type="evidence" value="ECO:0007669"/>
    <property type="project" value="UniProtKB-KW"/>
</dbReference>
<dbReference type="GO" id="GO:0046872">
    <property type="term" value="F:metal ion binding"/>
    <property type="evidence" value="ECO:0007669"/>
    <property type="project" value="UniProtKB-KW"/>
</dbReference>
<dbReference type="GO" id="GO:0009098">
    <property type="term" value="P:L-leucine biosynthetic process"/>
    <property type="evidence" value="ECO:0007669"/>
    <property type="project" value="UniProtKB-UniRule"/>
</dbReference>
<dbReference type="CDD" id="cd01583">
    <property type="entry name" value="IPMI"/>
    <property type="match status" value="1"/>
</dbReference>
<dbReference type="Gene3D" id="3.30.499.10">
    <property type="entry name" value="Aconitase, domain 3"/>
    <property type="match status" value="2"/>
</dbReference>
<dbReference type="HAMAP" id="MF_01026">
    <property type="entry name" value="LeuC_type1"/>
    <property type="match status" value="1"/>
</dbReference>
<dbReference type="InterPro" id="IPR004430">
    <property type="entry name" value="3-IsopropMal_deHydase_lsu"/>
</dbReference>
<dbReference type="InterPro" id="IPR015931">
    <property type="entry name" value="Acnase/IPM_dHydase_lsu_aba_1/3"/>
</dbReference>
<dbReference type="InterPro" id="IPR001030">
    <property type="entry name" value="Acoase/IPM_deHydtase_lsu_aba"/>
</dbReference>
<dbReference type="InterPro" id="IPR018136">
    <property type="entry name" value="Aconitase_4Fe-4S_BS"/>
</dbReference>
<dbReference type="InterPro" id="IPR036008">
    <property type="entry name" value="Aconitase_4Fe-4S_dom"/>
</dbReference>
<dbReference type="InterPro" id="IPR050067">
    <property type="entry name" value="IPM_dehydratase_rel_enz"/>
</dbReference>
<dbReference type="InterPro" id="IPR033941">
    <property type="entry name" value="IPMI_cat"/>
</dbReference>
<dbReference type="NCBIfam" id="TIGR00170">
    <property type="entry name" value="leuC"/>
    <property type="match status" value="1"/>
</dbReference>
<dbReference type="NCBIfam" id="NF004016">
    <property type="entry name" value="PRK05478.1"/>
    <property type="match status" value="1"/>
</dbReference>
<dbReference type="NCBIfam" id="NF009116">
    <property type="entry name" value="PRK12466.1"/>
    <property type="match status" value="1"/>
</dbReference>
<dbReference type="PANTHER" id="PTHR43822:SF9">
    <property type="entry name" value="3-ISOPROPYLMALATE DEHYDRATASE"/>
    <property type="match status" value="1"/>
</dbReference>
<dbReference type="PANTHER" id="PTHR43822">
    <property type="entry name" value="HOMOACONITASE, MITOCHONDRIAL-RELATED"/>
    <property type="match status" value="1"/>
</dbReference>
<dbReference type="Pfam" id="PF00330">
    <property type="entry name" value="Aconitase"/>
    <property type="match status" value="1"/>
</dbReference>
<dbReference type="PRINTS" id="PR00415">
    <property type="entry name" value="ACONITASE"/>
</dbReference>
<dbReference type="SUPFAM" id="SSF53732">
    <property type="entry name" value="Aconitase iron-sulfur domain"/>
    <property type="match status" value="1"/>
</dbReference>
<dbReference type="PROSITE" id="PS01244">
    <property type="entry name" value="ACONITASE_2"/>
    <property type="match status" value="1"/>
</dbReference>
<evidence type="ECO:0000255" key="1">
    <source>
        <dbReference type="HAMAP-Rule" id="MF_01026"/>
    </source>
</evidence>
<evidence type="ECO:0000256" key="2">
    <source>
        <dbReference type="SAM" id="MobiDB-lite"/>
    </source>
</evidence>
<feature type="chain" id="PRO_1000135661" description="3-isopropylmalate dehydratase large subunit">
    <location>
        <begin position="1"/>
        <end position="470"/>
    </location>
</feature>
<feature type="region of interest" description="Disordered" evidence="2">
    <location>
        <begin position="294"/>
        <end position="313"/>
    </location>
</feature>
<feature type="compositionally biased region" description="Polar residues" evidence="2">
    <location>
        <begin position="294"/>
        <end position="307"/>
    </location>
</feature>
<feature type="binding site" evidence="1">
    <location>
        <position position="347"/>
    </location>
    <ligand>
        <name>[4Fe-4S] cluster</name>
        <dbReference type="ChEBI" id="CHEBI:49883"/>
    </ligand>
</feature>
<feature type="binding site" evidence="1">
    <location>
        <position position="407"/>
    </location>
    <ligand>
        <name>[4Fe-4S] cluster</name>
        <dbReference type="ChEBI" id="CHEBI:49883"/>
    </ligand>
</feature>
<feature type="binding site" evidence="1">
    <location>
        <position position="410"/>
    </location>
    <ligand>
        <name>[4Fe-4S] cluster</name>
        <dbReference type="ChEBI" id="CHEBI:49883"/>
    </ligand>
</feature>
<gene>
    <name evidence="1" type="primary">leuC</name>
    <name type="ordered locus">Amuc_0666</name>
</gene>